<protein>
    <recommendedName>
        <fullName evidence="1">Tryptophan synthase beta chain</fullName>
        <ecNumber evidence="1">4.2.1.20</ecNumber>
    </recommendedName>
</protein>
<comment type="function">
    <text evidence="1">The beta subunit is responsible for the synthesis of L-tryptophan from indole and L-serine.</text>
</comment>
<comment type="catalytic activity">
    <reaction evidence="1">
        <text>(1S,2R)-1-C-(indol-3-yl)glycerol 3-phosphate + L-serine = D-glyceraldehyde 3-phosphate + L-tryptophan + H2O</text>
        <dbReference type="Rhea" id="RHEA:10532"/>
        <dbReference type="ChEBI" id="CHEBI:15377"/>
        <dbReference type="ChEBI" id="CHEBI:33384"/>
        <dbReference type="ChEBI" id="CHEBI:57912"/>
        <dbReference type="ChEBI" id="CHEBI:58866"/>
        <dbReference type="ChEBI" id="CHEBI:59776"/>
        <dbReference type="EC" id="4.2.1.20"/>
    </reaction>
</comment>
<comment type="cofactor">
    <cofactor evidence="1">
        <name>pyridoxal 5'-phosphate</name>
        <dbReference type="ChEBI" id="CHEBI:597326"/>
    </cofactor>
</comment>
<comment type="pathway">
    <text evidence="1">Amino-acid biosynthesis; L-tryptophan biosynthesis; L-tryptophan from chorismate: step 5/5.</text>
</comment>
<comment type="subunit">
    <text evidence="1">Tetramer of two alpha and two beta chains.</text>
</comment>
<comment type="similarity">
    <text evidence="1">Belongs to the TrpB family.</text>
</comment>
<keyword id="KW-0028">Amino-acid biosynthesis</keyword>
<keyword id="KW-0057">Aromatic amino acid biosynthesis</keyword>
<keyword id="KW-0456">Lyase</keyword>
<keyword id="KW-0663">Pyridoxal phosphate</keyword>
<keyword id="KW-1185">Reference proteome</keyword>
<keyword id="KW-0822">Tryptophan biosynthesis</keyword>
<feature type="chain" id="PRO_1000095832" description="Tryptophan synthase beta chain">
    <location>
        <begin position="1"/>
        <end position="391"/>
    </location>
</feature>
<feature type="modified residue" description="N6-(pyridoxal phosphate)lysine" evidence="1">
    <location>
        <position position="84"/>
    </location>
</feature>
<name>TRPB_THEP3</name>
<sequence length="391" mass="43062">MSGRFGRFGGQYVPETVMNALIELEREFEKAKEDKDFMEEYRYYLREYSGRPTPLYYAENLTKRLGGAKIYLKREDLNHTGAHKINNVLGQILLAKRMNKKRVIAETGAGQHGVATATAAAMFGMECEIFMGEEDIKRQSLNVFRMKLLGAKVTPVTTGTKTLKDAVNEAIRDWVTNIDNTFYVIGSVVGPHPYPTMVRDFQRVIGDEAKEQILQKEGRLPDYVIACVGGGSNAMGIFYPFIEDKEVKLIGVEAAGEGIETGKHAAAMAKGSVGVLHGMMTYLLQDEEGRIMPVYSISAGLDYPGVGPEHAFLKESNRAQYVYATDEEALAAFMDLSQTEGIIPALESAHALAYAMKLAPNLTKDNIIIVNLSGRGDKDVNTVAKVLGVEL</sequence>
<evidence type="ECO:0000255" key="1">
    <source>
        <dbReference type="HAMAP-Rule" id="MF_00133"/>
    </source>
</evidence>
<organism>
    <name type="scientific">Thermoanaerobacter pseudethanolicus (strain ATCC 33223 / 39E)</name>
    <name type="common">Clostridium thermohydrosulfuricum</name>
    <dbReference type="NCBI Taxonomy" id="340099"/>
    <lineage>
        <taxon>Bacteria</taxon>
        <taxon>Bacillati</taxon>
        <taxon>Bacillota</taxon>
        <taxon>Clostridia</taxon>
        <taxon>Thermoanaerobacterales</taxon>
        <taxon>Thermoanaerobacteraceae</taxon>
        <taxon>Thermoanaerobacter</taxon>
    </lineage>
</organism>
<reference key="1">
    <citation type="submission" date="2008-01" db="EMBL/GenBank/DDBJ databases">
        <title>Complete sequence of Thermoanaerobacter pseudethanolicus 39E.</title>
        <authorList>
            <person name="Copeland A."/>
            <person name="Lucas S."/>
            <person name="Lapidus A."/>
            <person name="Barry K."/>
            <person name="Glavina del Rio T."/>
            <person name="Dalin E."/>
            <person name="Tice H."/>
            <person name="Pitluck S."/>
            <person name="Bruce D."/>
            <person name="Goodwin L."/>
            <person name="Saunders E."/>
            <person name="Brettin T."/>
            <person name="Detter J.C."/>
            <person name="Han C."/>
            <person name="Schmutz J."/>
            <person name="Larimer F."/>
            <person name="Land M."/>
            <person name="Hauser L."/>
            <person name="Kyrpides N."/>
            <person name="Lykidis A."/>
            <person name="Hemme C."/>
            <person name="Fields M.W."/>
            <person name="He Z."/>
            <person name="Zhou J."/>
            <person name="Richardson P."/>
        </authorList>
    </citation>
    <scope>NUCLEOTIDE SEQUENCE [LARGE SCALE GENOMIC DNA]</scope>
    <source>
        <strain>ATCC 33223 / DSM 2355 / 39E</strain>
    </source>
</reference>
<gene>
    <name evidence="1" type="primary">trpB</name>
    <name type="ordered locus">Teth39_0893</name>
</gene>
<proteinExistence type="inferred from homology"/>
<dbReference type="EC" id="4.2.1.20" evidence="1"/>
<dbReference type="EMBL" id="CP000924">
    <property type="protein sequence ID" value="ABY94549.1"/>
    <property type="molecule type" value="Genomic_DNA"/>
</dbReference>
<dbReference type="RefSeq" id="WP_003867689.1">
    <property type="nucleotide sequence ID" value="NC_010321.1"/>
</dbReference>
<dbReference type="SMR" id="B0K8T6"/>
<dbReference type="STRING" id="340099.Teth39_0893"/>
<dbReference type="KEGG" id="tpd:Teth39_0893"/>
<dbReference type="eggNOG" id="COG0133">
    <property type="taxonomic scope" value="Bacteria"/>
</dbReference>
<dbReference type="HOGENOM" id="CLU_016734_3_1_9"/>
<dbReference type="UniPathway" id="UPA00035">
    <property type="reaction ID" value="UER00044"/>
</dbReference>
<dbReference type="Proteomes" id="UP000002156">
    <property type="component" value="Chromosome"/>
</dbReference>
<dbReference type="GO" id="GO:0005737">
    <property type="term" value="C:cytoplasm"/>
    <property type="evidence" value="ECO:0007669"/>
    <property type="project" value="TreeGrafter"/>
</dbReference>
<dbReference type="GO" id="GO:0004834">
    <property type="term" value="F:tryptophan synthase activity"/>
    <property type="evidence" value="ECO:0007669"/>
    <property type="project" value="UniProtKB-UniRule"/>
</dbReference>
<dbReference type="CDD" id="cd06446">
    <property type="entry name" value="Trp-synth_B"/>
    <property type="match status" value="1"/>
</dbReference>
<dbReference type="FunFam" id="3.40.50.1100:FF:000001">
    <property type="entry name" value="Tryptophan synthase beta chain"/>
    <property type="match status" value="1"/>
</dbReference>
<dbReference type="FunFam" id="3.40.50.1100:FF:000004">
    <property type="entry name" value="Tryptophan synthase beta chain"/>
    <property type="match status" value="1"/>
</dbReference>
<dbReference type="Gene3D" id="3.40.50.1100">
    <property type="match status" value="2"/>
</dbReference>
<dbReference type="HAMAP" id="MF_00133">
    <property type="entry name" value="Trp_synth_beta"/>
    <property type="match status" value="1"/>
</dbReference>
<dbReference type="InterPro" id="IPR006653">
    <property type="entry name" value="Trp_synth_b_CS"/>
</dbReference>
<dbReference type="InterPro" id="IPR006654">
    <property type="entry name" value="Trp_synth_beta"/>
</dbReference>
<dbReference type="InterPro" id="IPR023026">
    <property type="entry name" value="Trp_synth_beta/beta-like"/>
</dbReference>
<dbReference type="InterPro" id="IPR001926">
    <property type="entry name" value="TrpB-like_PALP"/>
</dbReference>
<dbReference type="InterPro" id="IPR036052">
    <property type="entry name" value="TrpB-like_PALP_sf"/>
</dbReference>
<dbReference type="NCBIfam" id="TIGR00263">
    <property type="entry name" value="trpB"/>
    <property type="match status" value="1"/>
</dbReference>
<dbReference type="PANTHER" id="PTHR48077:SF3">
    <property type="entry name" value="TRYPTOPHAN SYNTHASE"/>
    <property type="match status" value="1"/>
</dbReference>
<dbReference type="PANTHER" id="PTHR48077">
    <property type="entry name" value="TRYPTOPHAN SYNTHASE-RELATED"/>
    <property type="match status" value="1"/>
</dbReference>
<dbReference type="Pfam" id="PF00291">
    <property type="entry name" value="PALP"/>
    <property type="match status" value="1"/>
</dbReference>
<dbReference type="PIRSF" id="PIRSF001413">
    <property type="entry name" value="Trp_syn_beta"/>
    <property type="match status" value="1"/>
</dbReference>
<dbReference type="SUPFAM" id="SSF53686">
    <property type="entry name" value="Tryptophan synthase beta subunit-like PLP-dependent enzymes"/>
    <property type="match status" value="1"/>
</dbReference>
<dbReference type="PROSITE" id="PS00168">
    <property type="entry name" value="TRP_SYNTHASE_BETA"/>
    <property type="match status" value="1"/>
</dbReference>
<accession>B0K8T6</accession>